<reference key="1">
    <citation type="journal article" date="2005" name="Nature">
        <title>The genome sequence of the rice blast fungus Magnaporthe grisea.</title>
        <authorList>
            <person name="Dean R.A."/>
            <person name="Talbot N.J."/>
            <person name="Ebbole D.J."/>
            <person name="Farman M.L."/>
            <person name="Mitchell T.K."/>
            <person name="Orbach M.J."/>
            <person name="Thon M.R."/>
            <person name="Kulkarni R."/>
            <person name="Xu J.-R."/>
            <person name="Pan H."/>
            <person name="Read N.D."/>
            <person name="Lee Y.-H."/>
            <person name="Carbone I."/>
            <person name="Brown D."/>
            <person name="Oh Y.Y."/>
            <person name="Donofrio N."/>
            <person name="Jeong J.S."/>
            <person name="Soanes D.M."/>
            <person name="Djonovic S."/>
            <person name="Kolomiets E."/>
            <person name="Rehmeyer C."/>
            <person name="Li W."/>
            <person name="Harding M."/>
            <person name="Kim S."/>
            <person name="Lebrun M.-H."/>
            <person name="Bohnert H."/>
            <person name="Coughlan S."/>
            <person name="Butler J."/>
            <person name="Calvo S.E."/>
            <person name="Ma L.-J."/>
            <person name="Nicol R."/>
            <person name="Purcell S."/>
            <person name="Nusbaum C."/>
            <person name="Galagan J.E."/>
            <person name="Birren B.W."/>
        </authorList>
    </citation>
    <scope>NUCLEOTIDE SEQUENCE [LARGE SCALE GENOMIC DNA]</scope>
    <source>
        <strain>70-15 / ATCC MYA-4617 / FGSC 8958</strain>
    </source>
</reference>
<feature type="signal peptide" evidence="2">
    <location>
        <begin position="1"/>
        <end position="22"/>
    </location>
</feature>
<feature type="chain" id="PRO_0000429625" description="Endo-1,4-beta-xylanase 5">
    <location>
        <begin position="23"/>
        <end position="380"/>
    </location>
</feature>
<feature type="propeptide" id="PRO_0000429626" description="Removed in mature form" evidence="2">
    <location>
        <begin position="381"/>
        <end position="405"/>
    </location>
</feature>
<feature type="domain" description="GH10" evidence="3">
    <location>
        <begin position="32"/>
        <end position="352"/>
    </location>
</feature>
<feature type="active site" description="Proton donor" evidence="1">
    <location>
        <position position="166"/>
    </location>
</feature>
<feature type="active site" description="Nucleophile" evidence="1">
    <location>
        <position position="273"/>
    </location>
</feature>
<feature type="lipid moiety-binding region" description="GPI-anchor amidated glycine" evidence="2">
    <location>
        <position position="380"/>
    </location>
</feature>
<feature type="glycosylation site" description="N-linked (GlcNAc...) asparagine" evidence="2">
    <location>
        <position position="27"/>
    </location>
</feature>
<feature type="glycosylation site" description="N-linked (GlcNAc...) asparagine" evidence="2">
    <location>
        <position position="69"/>
    </location>
</feature>
<feature type="glycosylation site" description="N-linked (GlcNAc...) asparagine" evidence="2">
    <location>
        <position position="171"/>
    </location>
</feature>
<feature type="disulfide bond" evidence="1">
    <location>
        <begin position="302"/>
        <end position="308"/>
    </location>
</feature>
<gene>
    <name type="primary">XYL5</name>
    <name type="ORF">MGG_05464</name>
</gene>
<proteinExistence type="inferred from homology"/>
<protein>
    <recommendedName>
        <fullName>Endo-1,4-beta-xylanase 5</fullName>
        <shortName>Xylanase 5</shortName>
        <ecNumber>3.2.1.8</ecNumber>
    </recommendedName>
    <alternativeName>
        <fullName>1,4-beta-D-xylan xylanohydrolase 5</fullName>
    </alternativeName>
</protein>
<name>XYN5_PYRO7</name>
<comment type="function">
    <text evidence="1">Endo-1,4-beta-xylanase involved in the hydrolysis of xylan, a major structural heterogeneous polysaccharide found in plant biomass representing the second most abundant polysaccharide in the biosphere, after cellulose.</text>
</comment>
<comment type="catalytic activity">
    <reaction>
        <text>Endohydrolysis of (1-&gt;4)-beta-D-xylosidic linkages in xylans.</text>
        <dbReference type="EC" id="3.2.1.8"/>
    </reaction>
</comment>
<comment type="pathway">
    <text>Glycan degradation; xylan degradation.</text>
</comment>
<comment type="subcellular location">
    <subcellularLocation>
        <location evidence="4">Cell membrane</location>
        <topology evidence="4">Lipid-anchor</topology>
        <topology evidence="4">GPI-anchor</topology>
    </subcellularLocation>
    <subcellularLocation>
        <location evidence="1">Secreted</location>
    </subcellularLocation>
</comment>
<comment type="similarity">
    <text evidence="4">Belongs to the glycosyl hydrolase 10 (cellulase F) family.</text>
</comment>
<accession>G4MLU0</accession>
<keyword id="KW-0119">Carbohydrate metabolism</keyword>
<keyword id="KW-1003">Cell membrane</keyword>
<keyword id="KW-1015">Disulfide bond</keyword>
<keyword id="KW-0325">Glycoprotein</keyword>
<keyword id="KW-0326">Glycosidase</keyword>
<keyword id="KW-0336">GPI-anchor</keyword>
<keyword id="KW-0378">Hydrolase</keyword>
<keyword id="KW-0449">Lipoprotein</keyword>
<keyword id="KW-0472">Membrane</keyword>
<keyword id="KW-0624">Polysaccharide degradation</keyword>
<keyword id="KW-1185">Reference proteome</keyword>
<keyword id="KW-0964">Secreted</keyword>
<keyword id="KW-0732">Signal</keyword>
<keyword id="KW-0858">Xylan degradation</keyword>
<dbReference type="EC" id="3.2.1.8"/>
<dbReference type="EMBL" id="CM001231">
    <property type="protein sequence ID" value="EHA57718.1"/>
    <property type="molecule type" value="Genomic_DNA"/>
</dbReference>
<dbReference type="RefSeq" id="XP_003710330.1">
    <property type="nucleotide sequence ID" value="XM_003710282.1"/>
</dbReference>
<dbReference type="SMR" id="G4MLU0"/>
<dbReference type="STRING" id="242507.G4MLU0"/>
<dbReference type="CAZy" id="GH10">
    <property type="family name" value="Glycoside Hydrolase Family 10"/>
</dbReference>
<dbReference type="GlyCosmos" id="G4MLU0">
    <property type="glycosylation" value="3 sites, No reported glycans"/>
</dbReference>
<dbReference type="EnsemblFungi" id="MGG_05464T0">
    <property type="protein sequence ID" value="MGG_05464T0"/>
    <property type="gene ID" value="MGG_05464"/>
</dbReference>
<dbReference type="GeneID" id="2675881"/>
<dbReference type="KEGG" id="mgr:MGG_05464"/>
<dbReference type="VEuPathDB" id="FungiDB:MGG_05464"/>
<dbReference type="eggNOG" id="ENOG502QR4K">
    <property type="taxonomic scope" value="Eukaryota"/>
</dbReference>
<dbReference type="HOGENOM" id="CLU_020161_12_1_1"/>
<dbReference type="InParanoid" id="G4MLU0"/>
<dbReference type="OMA" id="GIADNHT"/>
<dbReference type="OrthoDB" id="3055998at2759"/>
<dbReference type="UniPathway" id="UPA00114"/>
<dbReference type="PHI-base" id="PHI:2208"/>
<dbReference type="Proteomes" id="UP000009058">
    <property type="component" value="Chromosome 1"/>
</dbReference>
<dbReference type="GO" id="GO:0005576">
    <property type="term" value="C:extracellular region"/>
    <property type="evidence" value="ECO:0007669"/>
    <property type="project" value="UniProtKB-SubCell"/>
</dbReference>
<dbReference type="GO" id="GO:0005886">
    <property type="term" value="C:plasma membrane"/>
    <property type="evidence" value="ECO:0007669"/>
    <property type="project" value="UniProtKB-SubCell"/>
</dbReference>
<dbReference type="GO" id="GO:0098552">
    <property type="term" value="C:side of membrane"/>
    <property type="evidence" value="ECO:0007669"/>
    <property type="project" value="UniProtKB-KW"/>
</dbReference>
<dbReference type="GO" id="GO:0031176">
    <property type="term" value="F:endo-1,4-beta-xylanase activity"/>
    <property type="evidence" value="ECO:0007669"/>
    <property type="project" value="UniProtKB-EC"/>
</dbReference>
<dbReference type="GO" id="GO:0045493">
    <property type="term" value="P:xylan catabolic process"/>
    <property type="evidence" value="ECO:0007669"/>
    <property type="project" value="UniProtKB-UniPathway"/>
</dbReference>
<dbReference type="Gene3D" id="3.20.20.80">
    <property type="entry name" value="Glycosidases"/>
    <property type="match status" value="1"/>
</dbReference>
<dbReference type="InterPro" id="IPR044846">
    <property type="entry name" value="GH10"/>
</dbReference>
<dbReference type="InterPro" id="IPR001000">
    <property type="entry name" value="GH10_dom"/>
</dbReference>
<dbReference type="InterPro" id="IPR017853">
    <property type="entry name" value="Glycoside_hydrolase_SF"/>
</dbReference>
<dbReference type="PANTHER" id="PTHR31490:SF35">
    <property type="entry name" value="ENDO-1,4-BETA-XYLANASE"/>
    <property type="match status" value="1"/>
</dbReference>
<dbReference type="PANTHER" id="PTHR31490">
    <property type="entry name" value="GLYCOSYL HYDROLASE"/>
    <property type="match status" value="1"/>
</dbReference>
<dbReference type="Pfam" id="PF00331">
    <property type="entry name" value="Glyco_hydro_10"/>
    <property type="match status" value="1"/>
</dbReference>
<dbReference type="PRINTS" id="PR00134">
    <property type="entry name" value="GLHYDRLASE10"/>
</dbReference>
<dbReference type="SMART" id="SM00633">
    <property type="entry name" value="Glyco_10"/>
    <property type="match status" value="1"/>
</dbReference>
<dbReference type="SUPFAM" id="SSF51445">
    <property type="entry name" value="(Trans)glycosidases"/>
    <property type="match status" value="1"/>
</dbReference>
<dbReference type="PROSITE" id="PS51760">
    <property type="entry name" value="GH10_2"/>
    <property type="match status" value="1"/>
</dbReference>
<organism>
    <name type="scientific">Pyricularia oryzae (strain 70-15 / ATCC MYA-4617 / FGSC 8958)</name>
    <name type="common">Rice blast fungus</name>
    <name type="synonym">Magnaporthe oryzae</name>
    <dbReference type="NCBI Taxonomy" id="242507"/>
    <lineage>
        <taxon>Eukaryota</taxon>
        <taxon>Fungi</taxon>
        <taxon>Dikarya</taxon>
        <taxon>Ascomycota</taxon>
        <taxon>Pezizomycotina</taxon>
        <taxon>Sordariomycetes</taxon>
        <taxon>Sordariomycetidae</taxon>
        <taxon>Magnaporthales</taxon>
        <taxon>Pyriculariaceae</taxon>
        <taxon>Pyricularia</taxon>
    </lineage>
</organism>
<evidence type="ECO:0000250" key="1"/>
<evidence type="ECO:0000255" key="2"/>
<evidence type="ECO:0000255" key="3">
    <source>
        <dbReference type="PROSITE-ProRule" id="PRU01096"/>
    </source>
</evidence>
<evidence type="ECO:0000305" key="4"/>
<sequence>MTRLATLITLAGLLAVSPGAYAQRNRNDTGGSTGAEGLNSLAVKAGLLYFGTASDTRNFADEPYMSVVNNTNEFGMIVPENSMKWEATEKEPGRFSFANADRVRALTKANGQMLRCHALTWHSQLPNFVKTTAWTRDTLTAAIESHISNEVGHFAGDCYAWDVVNEAVNENGSFRDSPFHRTLGTDFLAISFRAAAAADPNAKLYYNDFNIETPGPKANAAMGIVRLLKEQGVRIDGVGFQGHLTVGSTPSRAQLASQLQRFADLGVEVTYTELDIRHKSLPVSSRAAQDQARDYVSVIGSCLDVTACVGVMVWQPTDKYSWIPETFPGTGDACLFDANMNPKPAYTSVSSLLAAAAATAPASVVPPASVTTSKTPIQAGAGRETVSIAGLTLALSSLAFGMFML</sequence>